<protein>
    <recommendedName>
        <fullName evidence="1">tRNA 5-methylaminomethyl-2-thiouridine biosynthesis bifunctional protein MnmC</fullName>
        <shortName evidence="1">tRNA mnm(5)s(2)U biosynthesis bifunctional protein</shortName>
    </recommendedName>
    <domain>
        <recommendedName>
            <fullName evidence="1">tRNA (mnm(5)s(2)U34)-methyltransferase</fullName>
            <ecNumber evidence="1">2.1.1.61</ecNumber>
        </recommendedName>
    </domain>
    <domain>
        <recommendedName>
            <fullName evidence="1">FAD-dependent cmnm(5)s(2)U34 oxidoreductase</fullName>
            <ecNumber evidence="1">1.5.-.-</ecNumber>
        </recommendedName>
    </domain>
</protein>
<proteinExistence type="inferred from homology"/>
<accession>B0KTW1</accession>
<keyword id="KW-0963">Cytoplasm</keyword>
<keyword id="KW-0274">FAD</keyword>
<keyword id="KW-0285">Flavoprotein</keyword>
<keyword id="KW-0489">Methyltransferase</keyword>
<keyword id="KW-0511">Multifunctional enzyme</keyword>
<keyword id="KW-0560">Oxidoreductase</keyword>
<keyword id="KW-0949">S-adenosyl-L-methionine</keyword>
<keyword id="KW-0808">Transferase</keyword>
<keyword id="KW-0819">tRNA processing</keyword>
<feature type="chain" id="PRO_1000084794" description="tRNA 5-methylaminomethyl-2-thiouridine biosynthesis bifunctional protein MnmC">
    <location>
        <begin position="1"/>
        <end position="654"/>
    </location>
</feature>
<feature type="region of interest" description="tRNA (mnm(5)s(2)U34)-methyltransferase">
    <location>
        <begin position="1"/>
        <end position="236"/>
    </location>
</feature>
<feature type="region of interest" description="FAD-dependent cmnm(5)s(2)U34 oxidoreductase">
    <location>
        <begin position="262"/>
        <end position="654"/>
    </location>
</feature>
<sequence>MSTLLQHAQIDWDDQGRPHSRQYDDVYFAVNEGIEETKHVFLGQTRLAERFANLAPHTCGVIGETGFGTGMNFFCAWQLFDQHAHRDARLHFVSVEKYPLGHADMARAVSLWPELAAYTEPLLEQYVAVHPGFQQFTFANGRVTLTLLIGDVLEQLPQLDAQIDVWFLDGFAPAKNPDMWTPELFAQLARLSHPGTVLGTFTTTGWVRRSLVEAGFAMKKVPGIGKKWEVMSGAYVGPVPGPKAPWYARPAVAQGPREALVIGAGLAGSTTAASLARRGWQVTVLERHEAPAQEASGNPQGVLYLKLSAHGTALSQMILSGFGYTRRQLQRLQRGQDWDACGVLQLAFDAKEAERQGKLAAAFDHDLLHALERAEAEAIAGVALPAGGLFYPEGGWVHPPALCQQQLQHPGIRLLTHQDVIELRNIGQHWQAWAGDRLLASAPVVVLAGAADVRRFEPCAQLPLKRIRGQITRLPATASSRALRTVVCAEGYVAPPRGDEHTLGASFDFHSEDLAPTVAEHQGNLALLDEISVDLAQRLGVAELDAEQLQGRAAFRCTSPDYLPIVGPLADSQAFAEAYAVLGRDARQVPDVACPWLGGLYVNSGHGSRGLITAPLSGELVAAWVCGEPLPLPRAVAEACHPNRFALRRLIRGK</sequence>
<evidence type="ECO:0000255" key="1">
    <source>
        <dbReference type="HAMAP-Rule" id="MF_01102"/>
    </source>
</evidence>
<reference key="1">
    <citation type="submission" date="2008-01" db="EMBL/GenBank/DDBJ databases">
        <title>Complete sequence of Pseudomonas putida GB-1.</title>
        <authorList>
            <consortium name="US DOE Joint Genome Institute"/>
            <person name="Copeland A."/>
            <person name="Lucas S."/>
            <person name="Lapidus A."/>
            <person name="Barry K."/>
            <person name="Glavina del Rio T."/>
            <person name="Dalin E."/>
            <person name="Tice H."/>
            <person name="Pitluck S."/>
            <person name="Bruce D."/>
            <person name="Goodwin L."/>
            <person name="Chertkov O."/>
            <person name="Brettin T."/>
            <person name="Detter J.C."/>
            <person name="Han C."/>
            <person name="Kuske C.R."/>
            <person name="Schmutz J."/>
            <person name="Larimer F."/>
            <person name="Land M."/>
            <person name="Hauser L."/>
            <person name="Kyrpides N."/>
            <person name="Kim E."/>
            <person name="McCarthy J.K."/>
            <person name="Richardson P."/>
        </authorList>
    </citation>
    <scope>NUCLEOTIDE SEQUENCE [LARGE SCALE GENOMIC DNA]</scope>
    <source>
        <strain>GB-1</strain>
    </source>
</reference>
<gene>
    <name evidence="1" type="primary">mnmC</name>
    <name type="ordered locus">PputGB1_1343</name>
</gene>
<dbReference type="EC" id="2.1.1.61" evidence="1"/>
<dbReference type="EC" id="1.5.-.-" evidence="1"/>
<dbReference type="EMBL" id="CP000926">
    <property type="protein sequence ID" value="ABY97250.1"/>
    <property type="molecule type" value="Genomic_DNA"/>
</dbReference>
<dbReference type="RefSeq" id="WP_012271022.1">
    <property type="nucleotide sequence ID" value="NC_010322.1"/>
</dbReference>
<dbReference type="SMR" id="B0KTW1"/>
<dbReference type="KEGG" id="ppg:PputGB1_1343"/>
<dbReference type="eggNOG" id="COG0665">
    <property type="taxonomic scope" value="Bacteria"/>
</dbReference>
<dbReference type="eggNOG" id="COG4121">
    <property type="taxonomic scope" value="Bacteria"/>
</dbReference>
<dbReference type="HOGENOM" id="CLU_022427_1_0_6"/>
<dbReference type="Proteomes" id="UP000002157">
    <property type="component" value="Chromosome"/>
</dbReference>
<dbReference type="GO" id="GO:0005737">
    <property type="term" value="C:cytoplasm"/>
    <property type="evidence" value="ECO:0007669"/>
    <property type="project" value="UniProtKB-SubCell"/>
</dbReference>
<dbReference type="GO" id="GO:0050660">
    <property type="term" value="F:flavin adenine dinucleotide binding"/>
    <property type="evidence" value="ECO:0007669"/>
    <property type="project" value="UniProtKB-UniRule"/>
</dbReference>
<dbReference type="GO" id="GO:0016645">
    <property type="term" value="F:oxidoreductase activity, acting on the CH-NH group of donors"/>
    <property type="evidence" value="ECO:0007669"/>
    <property type="project" value="InterPro"/>
</dbReference>
<dbReference type="GO" id="GO:0004808">
    <property type="term" value="F:tRNA (5-methylaminomethyl-2-thiouridylate)(34)-methyltransferase activity"/>
    <property type="evidence" value="ECO:0007669"/>
    <property type="project" value="UniProtKB-EC"/>
</dbReference>
<dbReference type="GO" id="GO:0032259">
    <property type="term" value="P:methylation"/>
    <property type="evidence" value="ECO:0007669"/>
    <property type="project" value="UniProtKB-KW"/>
</dbReference>
<dbReference type="GO" id="GO:0002098">
    <property type="term" value="P:tRNA wobble uridine modification"/>
    <property type="evidence" value="ECO:0007669"/>
    <property type="project" value="TreeGrafter"/>
</dbReference>
<dbReference type="Gene3D" id="3.30.9.10">
    <property type="entry name" value="D-Amino Acid Oxidase, subunit A, domain 2"/>
    <property type="match status" value="1"/>
</dbReference>
<dbReference type="Gene3D" id="3.50.50.60">
    <property type="entry name" value="FAD/NAD(P)-binding domain"/>
    <property type="match status" value="1"/>
</dbReference>
<dbReference type="Gene3D" id="3.40.50.150">
    <property type="entry name" value="Vaccinia Virus protein VP39"/>
    <property type="match status" value="1"/>
</dbReference>
<dbReference type="HAMAP" id="MF_01102">
    <property type="entry name" value="MnmC"/>
    <property type="match status" value="1"/>
</dbReference>
<dbReference type="InterPro" id="IPR006076">
    <property type="entry name" value="FAD-dep_OxRdtase"/>
</dbReference>
<dbReference type="InterPro" id="IPR036188">
    <property type="entry name" value="FAD/NAD-bd_sf"/>
</dbReference>
<dbReference type="InterPro" id="IPR008471">
    <property type="entry name" value="MnmC-like_methylTransf"/>
</dbReference>
<dbReference type="InterPro" id="IPR029063">
    <property type="entry name" value="SAM-dependent_MTases_sf"/>
</dbReference>
<dbReference type="InterPro" id="IPR023032">
    <property type="entry name" value="tRNA_MAMT_biosynth_bifunc_MnmC"/>
</dbReference>
<dbReference type="InterPro" id="IPR047785">
    <property type="entry name" value="tRNA_MNMC2"/>
</dbReference>
<dbReference type="InterPro" id="IPR017610">
    <property type="entry name" value="tRNA_S-uridine_synth_MnmC_C"/>
</dbReference>
<dbReference type="NCBIfam" id="TIGR03197">
    <property type="entry name" value="MnmC_Cterm"/>
    <property type="match status" value="1"/>
</dbReference>
<dbReference type="NCBIfam" id="NF002481">
    <property type="entry name" value="PRK01747.1-2"/>
    <property type="match status" value="1"/>
</dbReference>
<dbReference type="NCBIfam" id="NF033855">
    <property type="entry name" value="tRNA_MNMC2"/>
    <property type="match status" value="1"/>
</dbReference>
<dbReference type="PANTHER" id="PTHR13847">
    <property type="entry name" value="SARCOSINE DEHYDROGENASE-RELATED"/>
    <property type="match status" value="1"/>
</dbReference>
<dbReference type="PANTHER" id="PTHR13847:SF283">
    <property type="entry name" value="TRNA 5-METHYLAMINOMETHYL-2-THIOURIDINE BIOSYNTHESIS BIFUNCTIONAL PROTEIN MNMC"/>
    <property type="match status" value="1"/>
</dbReference>
<dbReference type="Pfam" id="PF01266">
    <property type="entry name" value="DAO"/>
    <property type="match status" value="1"/>
</dbReference>
<dbReference type="Pfam" id="PF05430">
    <property type="entry name" value="Methyltransf_30"/>
    <property type="match status" value="1"/>
</dbReference>
<dbReference type="SUPFAM" id="SSF51905">
    <property type="entry name" value="FAD/NAD(P)-binding domain"/>
    <property type="match status" value="1"/>
</dbReference>
<dbReference type="SUPFAM" id="SSF53335">
    <property type="entry name" value="S-adenosyl-L-methionine-dependent methyltransferases"/>
    <property type="match status" value="1"/>
</dbReference>
<comment type="function">
    <text evidence="1">Catalyzes the last two steps in the biosynthesis of 5-methylaminomethyl-2-thiouridine (mnm(5)s(2)U) at the wobble position (U34) in tRNA. Catalyzes the FAD-dependent demodification of cmnm(5)s(2)U34 to nm(5)s(2)U34, followed by the transfer of a methyl group from S-adenosyl-L-methionine to nm(5)s(2)U34, to form mnm(5)s(2)U34.</text>
</comment>
<comment type="catalytic activity">
    <reaction evidence="1">
        <text>5-aminomethyl-2-thiouridine(34) in tRNA + S-adenosyl-L-methionine = 5-methylaminomethyl-2-thiouridine(34) in tRNA + S-adenosyl-L-homocysteine + H(+)</text>
        <dbReference type="Rhea" id="RHEA:19569"/>
        <dbReference type="Rhea" id="RHEA-COMP:10195"/>
        <dbReference type="Rhea" id="RHEA-COMP:10197"/>
        <dbReference type="ChEBI" id="CHEBI:15378"/>
        <dbReference type="ChEBI" id="CHEBI:57856"/>
        <dbReference type="ChEBI" id="CHEBI:59789"/>
        <dbReference type="ChEBI" id="CHEBI:74454"/>
        <dbReference type="ChEBI" id="CHEBI:74455"/>
        <dbReference type="EC" id="2.1.1.61"/>
    </reaction>
</comment>
<comment type="cofactor">
    <cofactor evidence="1">
        <name>FAD</name>
        <dbReference type="ChEBI" id="CHEBI:57692"/>
    </cofactor>
</comment>
<comment type="subcellular location">
    <subcellularLocation>
        <location evidence="1">Cytoplasm</location>
    </subcellularLocation>
</comment>
<comment type="similarity">
    <text evidence="1">In the N-terminal section; belongs to the methyltransferase superfamily. tRNA (mnm(5)s(2)U34)-methyltransferase family.</text>
</comment>
<comment type="similarity">
    <text evidence="1">In the C-terminal section; belongs to the DAO family.</text>
</comment>
<organism>
    <name type="scientific">Pseudomonas putida (strain GB-1)</name>
    <dbReference type="NCBI Taxonomy" id="76869"/>
    <lineage>
        <taxon>Bacteria</taxon>
        <taxon>Pseudomonadati</taxon>
        <taxon>Pseudomonadota</taxon>
        <taxon>Gammaproteobacteria</taxon>
        <taxon>Pseudomonadales</taxon>
        <taxon>Pseudomonadaceae</taxon>
        <taxon>Pseudomonas</taxon>
    </lineage>
</organism>
<name>MNMC_PSEPG</name>